<name>RUBR1_ECTOL</name>
<reference key="1">
    <citation type="journal article" date="1989" name="J. Biol. Chem.">
        <title>The Pseudomonas oleovorans alkBAC operon encodes two structurally related rubredoxins and an aldehyde dehydrogenase.</title>
        <authorList>
            <person name="Kok M."/>
            <person name="Oldenhuis R."/>
            <person name="van der Linden M.P.G."/>
            <person name="Meulenberg C.H.C."/>
            <person name="Kingma J."/>
            <person name="Witholt B."/>
        </authorList>
    </citation>
    <scope>NUCLEOTIDE SEQUENCE [GENOMIC DNA]</scope>
    <source>
        <strain>GPo1</strain>
    </source>
</reference>
<reference key="2">
    <citation type="journal article" date="1992" name="Mol. Microbiol.">
        <title>DNA sequence determination and functional characterization of the OCT-plasmid-encoded alkJKL genes of Pseudomonas oleovorans.</title>
        <authorList>
            <person name="van Beilen J.B."/>
            <person name="Eggink G."/>
            <person name="Enequist H."/>
            <person name="Bos R."/>
            <person name="Witholt B."/>
        </authorList>
    </citation>
    <scope>NUCLEOTIDE SEQUENCE [GENOMIC DNA]</scope>
    <source>
        <strain>GPo1</strain>
    </source>
</reference>
<reference key="3">
    <citation type="journal article" date="2000" name="Mol. Microbiol.">
        <title>A positive feedback mechanism controls expression of AlkS, the transcriptional regulator of the Pseudomonas oleovorans alkane degradation pathway.</title>
        <authorList>
            <person name="Canosa I."/>
            <person name="Sanchez-Romero J.M."/>
            <person name="Yuste L."/>
            <person name="Rojo F."/>
        </authorList>
    </citation>
    <scope>INDUCTION</scope>
</reference>
<feature type="chain" id="PRO_0000135043" description="Rubredoxin-1">
    <location>
        <begin position="1"/>
        <end position="132"/>
    </location>
</feature>
<feature type="domain" description="Rubredoxin-like" evidence="2">
    <location>
        <begin position="1"/>
        <end position="53"/>
    </location>
</feature>
<feature type="region of interest" description="Disordered" evidence="3">
    <location>
        <begin position="108"/>
        <end position="132"/>
    </location>
</feature>
<feature type="compositionally biased region" description="Polar residues" evidence="3">
    <location>
        <begin position="113"/>
        <end position="122"/>
    </location>
</feature>
<feature type="compositionally biased region" description="Basic residues" evidence="3">
    <location>
        <begin position="123"/>
        <end position="132"/>
    </location>
</feature>
<feature type="binding site" evidence="2">
    <location>
        <position position="6"/>
    </location>
    <ligand>
        <name>Fe cation</name>
        <dbReference type="ChEBI" id="CHEBI:24875"/>
    </ligand>
</feature>
<feature type="binding site" evidence="2">
    <location>
        <position position="9"/>
    </location>
    <ligand>
        <name>Fe cation</name>
        <dbReference type="ChEBI" id="CHEBI:24875"/>
    </ligand>
</feature>
<feature type="binding site" evidence="2">
    <location>
        <position position="39"/>
    </location>
    <ligand>
        <name>Fe cation</name>
        <dbReference type="ChEBI" id="CHEBI:24875"/>
    </ligand>
</feature>
<feature type="binding site" evidence="2">
    <location>
        <position position="42"/>
    </location>
    <ligand>
        <name>Fe cation</name>
        <dbReference type="ChEBI" id="CHEBI:24875"/>
    </ligand>
</feature>
<accession>P12692</accession>
<dbReference type="EMBL" id="AJ245436">
    <property type="protein sequence ID" value="CAB54051.1"/>
    <property type="molecule type" value="Genomic_DNA"/>
</dbReference>
<dbReference type="PIR" id="A32850">
    <property type="entry name" value="RUPSO1"/>
</dbReference>
<dbReference type="SMR" id="P12692"/>
<dbReference type="BioCyc" id="MetaCyc:MONOMER-3843"/>
<dbReference type="UniPathway" id="UPA00191"/>
<dbReference type="GO" id="GO:0005737">
    <property type="term" value="C:cytoplasm"/>
    <property type="evidence" value="ECO:0007669"/>
    <property type="project" value="UniProtKB-SubCell"/>
</dbReference>
<dbReference type="GO" id="GO:0009055">
    <property type="term" value="F:electron transfer activity"/>
    <property type="evidence" value="ECO:0007669"/>
    <property type="project" value="TreeGrafter"/>
</dbReference>
<dbReference type="GO" id="GO:0005506">
    <property type="term" value="F:iron ion binding"/>
    <property type="evidence" value="ECO:0007669"/>
    <property type="project" value="InterPro"/>
</dbReference>
<dbReference type="GO" id="GO:0043448">
    <property type="term" value="P:alkane catabolic process"/>
    <property type="evidence" value="ECO:0007669"/>
    <property type="project" value="UniProtKB-UniPathway"/>
</dbReference>
<dbReference type="CDD" id="cd00730">
    <property type="entry name" value="rubredoxin"/>
    <property type="match status" value="1"/>
</dbReference>
<dbReference type="Gene3D" id="2.20.28.10">
    <property type="match status" value="1"/>
</dbReference>
<dbReference type="InterPro" id="IPR024934">
    <property type="entry name" value="Rubredoxin-like_dom"/>
</dbReference>
<dbReference type="InterPro" id="IPR024935">
    <property type="entry name" value="Rubredoxin_dom"/>
</dbReference>
<dbReference type="InterPro" id="IPR050526">
    <property type="entry name" value="Rubredoxin_ET"/>
</dbReference>
<dbReference type="InterPro" id="IPR018527">
    <property type="entry name" value="Rubredoxin_Fe_BS"/>
</dbReference>
<dbReference type="PANTHER" id="PTHR47627">
    <property type="entry name" value="RUBREDOXIN"/>
    <property type="match status" value="1"/>
</dbReference>
<dbReference type="PANTHER" id="PTHR47627:SF1">
    <property type="entry name" value="RUBREDOXIN-1-RELATED"/>
    <property type="match status" value="1"/>
</dbReference>
<dbReference type="Pfam" id="PF00301">
    <property type="entry name" value="Rubredoxin"/>
    <property type="match status" value="1"/>
</dbReference>
<dbReference type="PRINTS" id="PR00163">
    <property type="entry name" value="RUBREDOXIN"/>
</dbReference>
<dbReference type="SUPFAM" id="SSF57802">
    <property type="entry name" value="Rubredoxin-like"/>
    <property type="match status" value="1"/>
</dbReference>
<dbReference type="PROSITE" id="PS00202">
    <property type="entry name" value="RUBREDOXIN"/>
    <property type="match status" value="1"/>
</dbReference>
<dbReference type="PROSITE" id="PS50903">
    <property type="entry name" value="RUBREDOXIN_LIKE"/>
    <property type="match status" value="1"/>
</dbReference>
<proteinExistence type="evidence at transcript level"/>
<evidence type="ECO:0000250" key="1"/>
<evidence type="ECO:0000255" key="2">
    <source>
        <dbReference type="PROSITE-ProRule" id="PRU00241"/>
    </source>
</evidence>
<evidence type="ECO:0000256" key="3">
    <source>
        <dbReference type="SAM" id="MobiDB-lite"/>
    </source>
</evidence>
<evidence type="ECO:0000269" key="4">
    <source>
    </source>
</evidence>
<evidence type="ECO:0000305" key="5"/>
<gene>
    <name type="primary">alkF</name>
</gene>
<protein>
    <recommendedName>
        <fullName>Rubredoxin-1</fullName>
        <shortName>Rdxs</shortName>
    </recommendedName>
</protein>
<geneLocation type="plasmid">
    <name>OCT</name>
</geneLocation>
<sequence>MSRYQCPDCQYIYDENKGEPHEGFHPNTSWNDIPKDWACPDCAVRDKVDFIFLADSPSKETQLGVNSQLANSESGISDATPTGMAVLAAELVIPLNQENKNEGCAAKTEVLDQASTPQVVRKSSTRKKMRNK</sequence>
<organism>
    <name type="scientific">Ectopseudomonas oleovorans</name>
    <name type="common">Pseudomonas oleovorans</name>
    <dbReference type="NCBI Taxonomy" id="301"/>
    <lineage>
        <taxon>Bacteria</taxon>
        <taxon>Pseudomonadati</taxon>
        <taxon>Pseudomonadota</taxon>
        <taxon>Gammaproteobacteria</taxon>
        <taxon>Pseudomonadales</taxon>
        <taxon>Pseudomonadaceae</taxon>
        <taxon>Ectopseudomonas</taxon>
    </lineage>
</organism>
<keyword id="KW-0963">Cytoplasm</keyword>
<keyword id="KW-0249">Electron transport</keyword>
<keyword id="KW-0408">Iron</keyword>
<keyword id="KW-0479">Metal-binding</keyword>
<keyword id="KW-0614">Plasmid</keyword>
<keyword id="KW-0813">Transport</keyword>
<comment type="function">
    <text>Not known. Probably involved in an electron transport pathway, but not required for the hydrocarbon hydroxylating system. Seems to be non-functional.</text>
</comment>
<comment type="cofactor">
    <cofactor evidence="1">
        <name>Fe(3+)</name>
        <dbReference type="ChEBI" id="CHEBI:29034"/>
    </cofactor>
    <text evidence="1">Binds 1 Fe(3+) ion per subunit.</text>
</comment>
<comment type="pathway">
    <text>Hydrocarbon metabolism; alkane degradation.</text>
</comment>
<comment type="subcellular location">
    <subcellularLocation>
        <location evidence="1">Cytoplasm</location>
    </subcellularLocation>
</comment>
<comment type="induction">
    <text evidence="4">Induced by AlkS.</text>
</comment>
<comment type="similarity">
    <text evidence="5">Belongs to the rubredoxin family.</text>
</comment>